<proteinExistence type="inferred from homology"/>
<feature type="chain" id="PRO_1000055396" description="Large ribosomal subunit protein uL13">
    <location>
        <begin position="1"/>
        <end position="147"/>
    </location>
</feature>
<keyword id="KW-1185">Reference proteome</keyword>
<keyword id="KW-0687">Ribonucleoprotein</keyword>
<keyword id="KW-0689">Ribosomal protein</keyword>
<gene>
    <name evidence="1" type="primary">rplM</name>
    <name type="ordered locus">LBA0323</name>
</gene>
<dbReference type="EMBL" id="CP000033">
    <property type="protein sequence ID" value="AAV42215.1"/>
    <property type="molecule type" value="Genomic_DNA"/>
</dbReference>
<dbReference type="RefSeq" id="WP_003549054.1">
    <property type="nucleotide sequence ID" value="NC_006814.3"/>
</dbReference>
<dbReference type="RefSeq" id="YP_193246.1">
    <property type="nucleotide sequence ID" value="NC_006814.3"/>
</dbReference>
<dbReference type="SMR" id="Q5FM59"/>
<dbReference type="STRING" id="272621.LBA0323"/>
<dbReference type="GeneID" id="93290569"/>
<dbReference type="KEGG" id="lac:LBA0323"/>
<dbReference type="PATRIC" id="fig|272621.13.peg.309"/>
<dbReference type="eggNOG" id="COG0102">
    <property type="taxonomic scope" value="Bacteria"/>
</dbReference>
<dbReference type="HOGENOM" id="CLU_082184_2_2_9"/>
<dbReference type="OrthoDB" id="9801330at2"/>
<dbReference type="BioCyc" id="LACI272621:G1G49-317-MONOMER"/>
<dbReference type="Proteomes" id="UP000006381">
    <property type="component" value="Chromosome"/>
</dbReference>
<dbReference type="GO" id="GO:0022625">
    <property type="term" value="C:cytosolic large ribosomal subunit"/>
    <property type="evidence" value="ECO:0007669"/>
    <property type="project" value="TreeGrafter"/>
</dbReference>
<dbReference type="GO" id="GO:0003729">
    <property type="term" value="F:mRNA binding"/>
    <property type="evidence" value="ECO:0007669"/>
    <property type="project" value="TreeGrafter"/>
</dbReference>
<dbReference type="GO" id="GO:0003735">
    <property type="term" value="F:structural constituent of ribosome"/>
    <property type="evidence" value="ECO:0007669"/>
    <property type="project" value="InterPro"/>
</dbReference>
<dbReference type="GO" id="GO:0017148">
    <property type="term" value="P:negative regulation of translation"/>
    <property type="evidence" value="ECO:0007669"/>
    <property type="project" value="TreeGrafter"/>
</dbReference>
<dbReference type="GO" id="GO:0006412">
    <property type="term" value="P:translation"/>
    <property type="evidence" value="ECO:0007669"/>
    <property type="project" value="UniProtKB-UniRule"/>
</dbReference>
<dbReference type="CDD" id="cd00392">
    <property type="entry name" value="Ribosomal_L13"/>
    <property type="match status" value="1"/>
</dbReference>
<dbReference type="FunFam" id="3.90.1180.10:FF:000001">
    <property type="entry name" value="50S ribosomal protein L13"/>
    <property type="match status" value="1"/>
</dbReference>
<dbReference type="Gene3D" id="3.90.1180.10">
    <property type="entry name" value="Ribosomal protein L13"/>
    <property type="match status" value="1"/>
</dbReference>
<dbReference type="HAMAP" id="MF_01366">
    <property type="entry name" value="Ribosomal_uL13"/>
    <property type="match status" value="1"/>
</dbReference>
<dbReference type="InterPro" id="IPR005822">
    <property type="entry name" value="Ribosomal_uL13"/>
</dbReference>
<dbReference type="InterPro" id="IPR005823">
    <property type="entry name" value="Ribosomal_uL13_bac-type"/>
</dbReference>
<dbReference type="InterPro" id="IPR023563">
    <property type="entry name" value="Ribosomal_uL13_CS"/>
</dbReference>
<dbReference type="InterPro" id="IPR036899">
    <property type="entry name" value="Ribosomal_uL13_sf"/>
</dbReference>
<dbReference type="NCBIfam" id="TIGR01066">
    <property type="entry name" value="rplM_bact"/>
    <property type="match status" value="1"/>
</dbReference>
<dbReference type="PANTHER" id="PTHR11545:SF2">
    <property type="entry name" value="LARGE RIBOSOMAL SUBUNIT PROTEIN UL13M"/>
    <property type="match status" value="1"/>
</dbReference>
<dbReference type="PANTHER" id="PTHR11545">
    <property type="entry name" value="RIBOSOMAL PROTEIN L13"/>
    <property type="match status" value="1"/>
</dbReference>
<dbReference type="Pfam" id="PF00572">
    <property type="entry name" value="Ribosomal_L13"/>
    <property type="match status" value="1"/>
</dbReference>
<dbReference type="PIRSF" id="PIRSF002181">
    <property type="entry name" value="Ribosomal_L13"/>
    <property type="match status" value="1"/>
</dbReference>
<dbReference type="SUPFAM" id="SSF52161">
    <property type="entry name" value="Ribosomal protein L13"/>
    <property type="match status" value="1"/>
</dbReference>
<dbReference type="PROSITE" id="PS00783">
    <property type="entry name" value="RIBOSOMAL_L13"/>
    <property type="match status" value="1"/>
</dbReference>
<organism>
    <name type="scientific">Lactobacillus acidophilus (strain ATCC 700396 / NCK56 / N2 / NCFM)</name>
    <dbReference type="NCBI Taxonomy" id="272621"/>
    <lineage>
        <taxon>Bacteria</taxon>
        <taxon>Bacillati</taxon>
        <taxon>Bacillota</taxon>
        <taxon>Bacilli</taxon>
        <taxon>Lactobacillales</taxon>
        <taxon>Lactobacillaceae</taxon>
        <taxon>Lactobacillus</taxon>
    </lineage>
</organism>
<protein>
    <recommendedName>
        <fullName evidence="1">Large ribosomal subunit protein uL13</fullName>
    </recommendedName>
    <alternativeName>
        <fullName evidence="2">50S ribosomal protein L13</fullName>
    </alternativeName>
</protein>
<name>RL13_LACAC</name>
<sequence length="147" mass="16432">MRTTPLAKSSEIERKWYIIDATDVSLGRLSAAVATILRGKNKPQYTPNVDCGDNVIVVNASKIKLTGKKASDKFYYHHSSWRGGLKAVSYGELLANNPVKMVEISVKGMLPKNTLGHQEFLKMHVYAGEDHKHEAQKPEKLDINKLI</sequence>
<evidence type="ECO:0000255" key="1">
    <source>
        <dbReference type="HAMAP-Rule" id="MF_01366"/>
    </source>
</evidence>
<evidence type="ECO:0000305" key="2"/>
<reference key="1">
    <citation type="journal article" date="2005" name="Proc. Natl. Acad. Sci. U.S.A.">
        <title>Complete genome sequence of the probiotic lactic acid bacterium Lactobacillus acidophilus NCFM.</title>
        <authorList>
            <person name="Altermann E."/>
            <person name="Russell W.M."/>
            <person name="Azcarate-Peril M.A."/>
            <person name="Barrangou R."/>
            <person name="Buck B.L."/>
            <person name="McAuliffe O."/>
            <person name="Souther N."/>
            <person name="Dobson A."/>
            <person name="Duong T."/>
            <person name="Callanan M."/>
            <person name="Lick S."/>
            <person name="Hamrick A."/>
            <person name="Cano R."/>
            <person name="Klaenhammer T.R."/>
        </authorList>
    </citation>
    <scope>NUCLEOTIDE SEQUENCE [LARGE SCALE GENOMIC DNA]</scope>
    <source>
        <strain>ATCC 700396 / NCK56 / N2 / NCFM</strain>
    </source>
</reference>
<comment type="function">
    <text evidence="1">This protein is one of the early assembly proteins of the 50S ribosomal subunit, although it is not seen to bind rRNA by itself. It is important during the early stages of 50S assembly.</text>
</comment>
<comment type="subunit">
    <text evidence="1">Part of the 50S ribosomal subunit.</text>
</comment>
<comment type="similarity">
    <text evidence="1">Belongs to the universal ribosomal protein uL13 family.</text>
</comment>
<accession>Q5FM59</accession>